<reference key="1">
    <citation type="journal article" date="1988" name="Nucleic Acids Res.">
        <title>Evolution of the herpes thymidine kinase: identification and comparison of the equine herpesvirus 1 thymidine kinase gene reveals similarity to a cell-encoded thymidylate kinase.</title>
        <authorList>
            <person name="Robertson G.R."/>
            <person name="Whalley J.M."/>
        </authorList>
    </citation>
    <scope>NUCLEOTIDE SEQUENCE [GENOMIC DNA]</scope>
</reference>
<sequence>MAARVPSGEARRSASGAPVRRQVTIVRIYLDGVYGIGKSTTGRVMASAASGGSPTLYFPEPMAYWRTLFEADVISGIYDTQNRKQQGDLAADDAASITAHYQSRFTTPYLILHDHTFGLFGGDSLQRGTRPDLTVVFDRHPVASAVCFPAARYLIGDMSMCALIAMVATLPREPQGGNIVVTTLNVDEHVRRLRTRARIGEQIDMKLIATLRNVYSMLANTSNFLRSGRVWRDGWGELPLSCETYKHRATQMDAFQERESPELSDTLFAMFKTPELLDDRGVILEVHAWALDALMLKLRNLSVFCADLSGTPRQCAATVESLIPLMSSTLSDSESASSLERAARTFNAEMGV</sequence>
<evidence type="ECO:0000255" key="1">
    <source>
        <dbReference type="HAMAP-Rule" id="MF_04029"/>
    </source>
</evidence>
<gene>
    <name evidence="1" type="primary">TK</name>
</gene>
<proteinExistence type="inferred from homology"/>
<accession>P69186</accession>
<accession>P09100</accession>
<accession>P28856</accession>
<feature type="chain" id="PRO_0000175065" description="Thymidine kinase">
    <location>
        <begin position="1"/>
        <end position="352"/>
    </location>
</feature>
<feature type="active site" description="Proton acceptor" evidence="1">
    <location>
        <position position="60"/>
    </location>
</feature>
<feature type="binding site" evidence="1">
    <location>
        <begin position="32"/>
        <end position="39"/>
    </location>
    <ligand>
        <name>ATP</name>
        <dbReference type="ChEBI" id="CHEBI:30616"/>
    </ligand>
</feature>
<feature type="binding site" evidence="1">
    <location>
        <position position="78"/>
    </location>
    <ligand>
        <name>substrate</name>
    </ligand>
</feature>
<feature type="binding site" evidence="1">
    <location>
        <position position="102"/>
    </location>
    <ligand>
        <name>substrate</name>
    </ligand>
</feature>
<feature type="binding site" evidence="1">
    <location>
        <position position="192"/>
    </location>
    <ligand>
        <name>ATP</name>
        <dbReference type="ChEBI" id="CHEBI:30616"/>
    </ligand>
</feature>
<feature type="binding site" evidence="1">
    <location>
        <position position="198"/>
    </location>
    <ligand>
        <name>substrate</name>
    </ligand>
</feature>
<name>KITH_EHV1</name>
<keyword id="KW-0067">ATP-binding</keyword>
<keyword id="KW-0237">DNA synthesis</keyword>
<keyword id="KW-0244">Early protein</keyword>
<keyword id="KW-0418">Kinase</keyword>
<keyword id="KW-0547">Nucleotide-binding</keyword>
<keyword id="KW-0808">Transferase</keyword>
<protein>
    <recommendedName>
        <fullName evidence="1">Thymidine kinase</fullName>
        <ecNumber evidence="1">2.7.1.21</ecNumber>
    </recommendedName>
</protein>
<comment type="function">
    <text evidence="1">Catalyzes the transfer of the gamma-phospho group of ATP to thymidine to generate dTMP in the salvage pathway of pyrimidine synthesis. The dTMP serves as a substrate for DNA polymerase during viral DNA replication. Allows the virus to be reactivated and to grow in non-proliferative cells lacking a high concentration of phosphorylated nucleic acid precursors.</text>
</comment>
<comment type="catalytic activity">
    <reaction evidence="1">
        <text>thymidine + ATP = dTMP + ADP + H(+)</text>
        <dbReference type="Rhea" id="RHEA:19129"/>
        <dbReference type="ChEBI" id="CHEBI:15378"/>
        <dbReference type="ChEBI" id="CHEBI:17748"/>
        <dbReference type="ChEBI" id="CHEBI:30616"/>
        <dbReference type="ChEBI" id="CHEBI:63528"/>
        <dbReference type="ChEBI" id="CHEBI:456216"/>
        <dbReference type="EC" id="2.7.1.21"/>
    </reaction>
</comment>
<comment type="subunit">
    <text evidence="1">Homodimer.</text>
</comment>
<comment type="similarity">
    <text evidence="1">Belongs to the herpesviridae thymidine kinase family.</text>
</comment>
<organismHost>
    <name type="scientific">Equus caballus</name>
    <name type="common">Horse</name>
    <dbReference type="NCBI Taxonomy" id="9796"/>
</organismHost>
<dbReference type="EC" id="2.7.1.21" evidence="1"/>
<dbReference type="EMBL" id="X13209">
    <property type="protein sequence ID" value="CAA31599.1"/>
    <property type="molecule type" value="Genomic_DNA"/>
</dbReference>
<dbReference type="PIR" id="S01995">
    <property type="entry name" value="KIBED2"/>
</dbReference>
<dbReference type="SMR" id="P69186"/>
<dbReference type="KEGG" id="vg:1487533"/>
<dbReference type="GO" id="GO:0005524">
    <property type="term" value="F:ATP binding"/>
    <property type="evidence" value="ECO:0007669"/>
    <property type="project" value="UniProtKB-KW"/>
</dbReference>
<dbReference type="GO" id="GO:0004797">
    <property type="term" value="F:thymidine kinase activity"/>
    <property type="evidence" value="ECO:0007669"/>
    <property type="project" value="UniProtKB-EC"/>
</dbReference>
<dbReference type="GO" id="GO:0071897">
    <property type="term" value="P:DNA biosynthetic process"/>
    <property type="evidence" value="ECO:0007669"/>
    <property type="project" value="UniProtKB-KW"/>
</dbReference>
<dbReference type="GO" id="GO:0006230">
    <property type="term" value="P:TMP biosynthetic process"/>
    <property type="evidence" value="ECO:0007669"/>
    <property type="project" value="InterPro"/>
</dbReference>
<dbReference type="Gene3D" id="3.40.50.300">
    <property type="entry name" value="P-loop containing nucleotide triphosphate hydrolases"/>
    <property type="match status" value="1"/>
</dbReference>
<dbReference type="HAMAP" id="MF_04029">
    <property type="entry name" value="HSV_KITH"/>
    <property type="match status" value="1"/>
</dbReference>
<dbReference type="InterPro" id="IPR001889">
    <property type="entry name" value="Herpes_TK"/>
</dbReference>
<dbReference type="InterPro" id="IPR027417">
    <property type="entry name" value="P-loop_NTPase"/>
</dbReference>
<dbReference type="Pfam" id="PF00693">
    <property type="entry name" value="Herpes_TK"/>
    <property type="match status" value="1"/>
</dbReference>
<dbReference type="SUPFAM" id="SSF52540">
    <property type="entry name" value="P-loop containing nucleoside triphosphate hydrolases"/>
    <property type="match status" value="1"/>
</dbReference>
<organism>
    <name type="scientific">Equine herpesvirus 1 (strain HVS25A)</name>
    <name type="common">EHV-1</name>
    <name type="synonym">Equine abortion virus</name>
    <dbReference type="NCBI Taxonomy" id="10327"/>
    <lineage>
        <taxon>Viruses</taxon>
        <taxon>Duplodnaviria</taxon>
        <taxon>Heunggongvirae</taxon>
        <taxon>Peploviricota</taxon>
        <taxon>Herviviricetes</taxon>
        <taxon>Herpesvirales</taxon>
        <taxon>Orthoherpesviridae</taxon>
        <taxon>Alphaherpesvirinae</taxon>
        <taxon>Varicellovirus</taxon>
        <taxon>Varicellovirus equidalpha1</taxon>
        <taxon>Equid alphaherpesvirus 1</taxon>
    </lineage>
</organism>